<reference key="1">
    <citation type="submission" date="2008-02" db="EMBL/GenBank/DDBJ databases">
        <title>Complete sequence of Escherichia coli C str. ATCC 8739.</title>
        <authorList>
            <person name="Copeland A."/>
            <person name="Lucas S."/>
            <person name="Lapidus A."/>
            <person name="Glavina del Rio T."/>
            <person name="Dalin E."/>
            <person name="Tice H."/>
            <person name="Bruce D."/>
            <person name="Goodwin L."/>
            <person name="Pitluck S."/>
            <person name="Kiss H."/>
            <person name="Brettin T."/>
            <person name="Detter J.C."/>
            <person name="Han C."/>
            <person name="Kuske C.R."/>
            <person name="Schmutz J."/>
            <person name="Larimer F."/>
            <person name="Land M."/>
            <person name="Hauser L."/>
            <person name="Kyrpides N."/>
            <person name="Mikhailova N."/>
            <person name="Ingram L."/>
            <person name="Richardson P."/>
        </authorList>
    </citation>
    <scope>NUCLEOTIDE SEQUENCE [LARGE SCALE GENOMIC DNA]</scope>
    <source>
        <strain>ATCC 8739 / DSM 1576 / NBRC 3972 / NCIMB 8545 / WDCM 00012 / Crooks</strain>
    </source>
</reference>
<gene>
    <name evidence="1" type="primary">zipA</name>
    <name type="ordered locus">EcolC_1266</name>
</gene>
<protein>
    <recommendedName>
        <fullName evidence="1">Cell division protein ZipA</fullName>
    </recommendedName>
</protein>
<keyword id="KW-0131">Cell cycle</keyword>
<keyword id="KW-0132">Cell division</keyword>
<keyword id="KW-0997">Cell inner membrane</keyword>
<keyword id="KW-1003">Cell membrane</keyword>
<keyword id="KW-0472">Membrane</keyword>
<keyword id="KW-0812">Transmembrane</keyword>
<keyword id="KW-1133">Transmembrane helix</keyword>
<evidence type="ECO:0000255" key="1">
    <source>
        <dbReference type="HAMAP-Rule" id="MF_00509"/>
    </source>
</evidence>
<evidence type="ECO:0000256" key="2">
    <source>
        <dbReference type="SAM" id="MobiDB-lite"/>
    </source>
</evidence>
<accession>B1IX59</accession>
<organism>
    <name type="scientific">Escherichia coli (strain ATCC 8739 / DSM 1576 / NBRC 3972 / NCIMB 8545 / WDCM 00012 / Crooks)</name>
    <dbReference type="NCBI Taxonomy" id="481805"/>
    <lineage>
        <taxon>Bacteria</taxon>
        <taxon>Pseudomonadati</taxon>
        <taxon>Pseudomonadota</taxon>
        <taxon>Gammaproteobacteria</taxon>
        <taxon>Enterobacterales</taxon>
        <taxon>Enterobacteriaceae</taxon>
        <taxon>Escherichia</taxon>
    </lineage>
</organism>
<proteinExistence type="inferred from homology"/>
<feature type="chain" id="PRO_1000081576" description="Cell division protein ZipA">
    <location>
        <begin position="1"/>
        <end position="328"/>
    </location>
</feature>
<feature type="topological domain" description="Periplasmic" evidence="1">
    <location>
        <begin position="1"/>
        <end position="6"/>
    </location>
</feature>
<feature type="transmembrane region" description="Helical" evidence="1">
    <location>
        <begin position="7"/>
        <end position="27"/>
    </location>
</feature>
<feature type="topological domain" description="Cytoplasmic" evidence="1">
    <location>
        <begin position="28"/>
        <end position="328"/>
    </location>
</feature>
<feature type="region of interest" description="Disordered" evidence="2">
    <location>
        <begin position="42"/>
        <end position="186"/>
    </location>
</feature>
<feature type="compositionally biased region" description="Acidic residues" evidence="2">
    <location>
        <begin position="51"/>
        <end position="63"/>
    </location>
</feature>
<feature type="compositionally biased region" description="Low complexity" evidence="2">
    <location>
        <begin position="97"/>
        <end position="115"/>
    </location>
</feature>
<feature type="compositionally biased region" description="Low complexity" evidence="2">
    <location>
        <begin position="123"/>
        <end position="171"/>
    </location>
</feature>
<sequence length="328" mass="36475">MMQDLRLILIIVGAIAIIALLVHGFWTSRKERSSMFRDRPLKRMKSKRDDDSYDEDVEDDEGVGEVRVHRVNHAPANAQEHEAARPSPQHQYQPPYASAQPRQPVQQPPEAQVPPQHAPHPAQPVQQPAYQPQPEQPLQQPVSPQVAPAPQPVHSAPQPAQQAFQPAEPVAAPQPEPVAEPAPVMDKPKRKEAVIIMNVAAHHGSELNGELLLNSIQQAGFIFGDMNIYHRHLSPDGSGPALFSLANMVKPGTFDPEMKDFTTPGVTIFMQVPSYGDELQNFKLMLQSAQHIADEVGGVVLDDQRRMMTPQKLREYQDIIREVKDANA</sequence>
<comment type="function">
    <text evidence="1">Essential cell division protein that stabilizes the FtsZ protofilaments by cross-linking them and that serves as a cytoplasmic membrane anchor for the Z ring. Also required for the recruitment to the septal ring of downstream cell division proteins.</text>
</comment>
<comment type="subunit">
    <text evidence="1">Interacts with FtsZ via their C-terminal domains.</text>
</comment>
<comment type="subcellular location">
    <subcellularLocation>
        <location evidence="1">Cell inner membrane</location>
        <topology evidence="1">Single-pass type I membrane protein</topology>
    </subcellularLocation>
    <text evidence="1">Localizes to the Z ring in an FtsZ-dependent manner.</text>
</comment>
<comment type="similarity">
    <text evidence="1">Belongs to the ZipA family.</text>
</comment>
<dbReference type="EMBL" id="CP000946">
    <property type="protein sequence ID" value="ACA76932.1"/>
    <property type="molecule type" value="Genomic_DNA"/>
</dbReference>
<dbReference type="RefSeq" id="WP_001300494.1">
    <property type="nucleotide sequence ID" value="NZ_MTFT01000002.1"/>
</dbReference>
<dbReference type="BMRB" id="B1IX59"/>
<dbReference type="SMR" id="B1IX59"/>
<dbReference type="KEGG" id="ecl:EcolC_1266"/>
<dbReference type="HOGENOM" id="CLU_030174_1_0_6"/>
<dbReference type="GO" id="GO:0032153">
    <property type="term" value="C:cell division site"/>
    <property type="evidence" value="ECO:0007669"/>
    <property type="project" value="UniProtKB-UniRule"/>
</dbReference>
<dbReference type="GO" id="GO:0005886">
    <property type="term" value="C:plasma membrane"/>
    <property type="evidence" value="ECO:0007669"/>
    <property type="project" value="UniProtKB-SubCell"/>
</dbReference>
<dbReference type="GO" id="GO:0000917">
    <property type="term" value="P:division septum assembly"/>
    <property type="evidence" value="ECO:0007669"/>
    <property type="project" value="TreeGrafter"/>
</dbReference>
<dbReference type="GO" id="GO:0043093">
    <property type="term" value="P:FtsZ-dependent cytokinesis"/>
    <property type="evidence" value="ECO:0007669"/>
    <property type="project" value="UniProtKB-UniRule"/>
</dbReference>
<dbReference type="CDD" id="cd00231">
    <property type="entry name" value="ZipA"/>
    <property type="match status" value="1"/>
</dbReference>
<dbReference type="FunFam" id="3.30.1400.10:FF:000001">
    <property type="entry name" value="Cell division protein ZipA"/>
    <property type="match status" value="1"/>
</dbReference>
<dbReference type="Gene3D" id="3.30.1400.10">
    <property type="entry name" value="ZipA, C-terminal FtsZ-binding domain"/>
    <property type="match status" value="1"/>
</dbReference>
<dbReference type="HAMAP" id="MF_00509">
    <property type="entry name" value="ZipA"/>
    <property type="match status" value="1"/>
</dbReference>
<dbReference type="InterPro" id="IPR011919">
    <property type="entry name" value="Cell_div_ZipA"/>
</dbReference>
<dbReference type="InterPro" id="IPR007449">
    <property type="entry name" value="ZipA_FtsZ-bd_C"/>
</dbReference>
<dbReference type="InterPro" id="IPR036765">
    <property type="entry name" value="ZipA_FtsZ-bd_C_sf"/>
</dbReference>
<dbReference type="NCBIfam" id="TIGR02205">
    <property type="entry name" value="septum_zipA"/>
    <property type="match status" value="1"/>
</dbReference>
<dbReference type="PANTHER" id="PTHR38685">
    <property type="entry name" value="CELL DIVISION PROTEIN ZIPA"/>
    <property type="match status" value="1"/>
</dbReference>
<dbReference type="PANTHER" id="PTHR38685:SF1">
    <property type="entry name" value="CELL DIVISION PROTEIN ZIPA"/>
    <property type="match status" value="1"/>
</dbReference>
<dbReference type="Pfam" id="PF04354">
    <property type="entry name" value="ZipA_C"/>
    <property type="match status" value="1"/>
</dbReference>
<dbReference type="SMART" id="SM00771">
    <property type="entry name" value="ZipA_C"/>
    <property type="match status" value="1"/>
</dbReference>
<dbReference type="SUPFAM" id="SSF64383">
    <property type="entry name" value="Cell-division protein ZipA, C-terminal domain"/>
    <property type="match status" value="1"/>
</dbReference>
<name>ZIPA_ECOLC</name>